<feature type="chain" id="PRO_1000128298" description="Small ribosomal subunit protein uS14">
    <location>
        <begin position="1"/>
        <end position="89"/>
    </location>
</feature>
<dbReference type="EMBL" id="AP010656">
    <property type="protein sequence ID" value="BAG83344.1"/>
    <property type="molecule type" value="Genomic_DNA"/>
</dbReference>
<dbReference type="RefSeq" id="WP_012573105.1">
    <property type="nucleotide sequence ID" value="NC_011565.1"/>
</dbReference>
<dbReference type="SMR" id="B6YQ72"/>
<dbReference type="STRING" id="511995.CFPG_081"/>
<dbReference type="KEGG" id="aps:CFPG_081"/>
<dbReference type="eggNOG" id="COG0199">
    <property type="taxonomic scope" value="Bacteria"/>
</dbReference>
<dbReference type="HOGENOM" id="CLU_139869_0_0_10"/>
<dbReference type="OrthoDB" id="9810484at2"/>
<dbReference type="Proteomes" id="UP000000723">
    <property type="component" value="Chromosome"/>
</dbReference>
<dbReference type="GO" id="GO:0005737">
    <property type="term" value="C:cytoplasm"/>
    <property type="evidence" value="ECO:0007669"/>
    <property type="project" value="UniProtKB-ARBA"/>
</dbReference>
<dbReference type="GO" id="GO:0015935">
    <property type="term" value="C:small ribosomal subunit"/>
    <property type="evidence" value="ECO:0007669"/>
    <property type="project" value="TreeGrafter"/>
</dbReference>
<dbReference type="GO" id="GO:0019843">
    <property type="term" value="F:rRNA binding"/>
    <property type="evidence" value="ECO:0007669"/>
    <property type="project" value="UniProtKB-UniRule"/>
</dbReference>
<dbReference type="GO" id="GO:0003735">
    <property type="term" value="F:structural constituent of ribosome"/>
    <property type="evidence" value="ECO:0007669"/>
    <property type="project" value="InterPro"/>
</dbReference>
<dbReference type="GO" id="GO:0006412">
    <property type="term" value="P:translation"/>
    <property type="evidence" value="ECO:0007669"/>
    <property type="project" value="UniProtKB-UniRule"/>
</dbReference>
<dbReference type="Gene3D" id="4.10.830.10">
    <property type="entry name" value="30s Ribosomal Protein S14, Chain N"/>
    <property type="match status" value="1"/>
</dbReference>
<dbReference type="HAMAP" id="MF_00537">
    <property type="entry name" value="Ribosomal_uS14_1"/>
    <property type="match status" value="1"/>
</dbReference>
<dbReference type="InterPro" id="IPR001209">
    <property type="entry name" value="Ribosomal_uS14"/>
</dbReference>
<dbReference type="InterPro" id="IPR023036">
    <property type="entry name" value="Ribosomal_uS14_bac/plastid"/>
</dbReference>
<dbReference type="InterPro" id="IPR018271">
    <property type="entry name" value="Ribosomal_uS14_CS"/>
</dbReference>
<dbReference type="InterPro" id="IPR043140">
    <property type="entry name" value="Ribosomal_uS14_sf"/>
</dbReference>
<dbReference type="NCBIfam" id="NF006477">
    <property type="entry name" value="PRK08881.1"/>
    <property type="match status" value="1"/>
</dbReference>
<dbReference type="PANTHER" id="PTHR19836">
    <property type="entry name" value="30S RIBOSOMAL PROTEIN S14"/>
    <property type="match status" value="1"/>
</dbReference>
<dbReference type="PANTHER" id="PTHR19836:SF19">
    <property type="entry name" value="SMALL RIBOSOMAL SUBUNIT PROTEIN US14M"/>
    <property type="match status" value="1"/>
</dbReference>
<dbReference type="Pfam" id="PF00253">
    <property type="entry name" value="Ribosomal_S14"/>
    <property type="match status" value="1"/>
</dbReference>
<dbReference type="SUPFAM" id="SSF57716">
    <property type="entry name" value="Glucocorticoid receptor-like (DNA-binding domain)"/>
    <property type="match status" value="1"/>
</dbReference>
<dbReference type="PROSITE" id="PS00527">
    <property type="entry name" value="RIBOSOMAL_S14"/>
    <property type="match status" value="1"/>
</dbReference>
<gene>
    <name evidence="1" type="primary">rpsN</name>
    <name type="ordered locus">CFPG_081</name>
</gene>
<proteinExistence type="inferred from homology"/>
<accession>B6YQ72</accession>
<sequence length="89" mass="10257">MAKESMKARELKRARLVAKYVDKRVRLKKEGNYDSLQALPKNASPVRLHNRCRITGRSKGYIRQFGISRIQLREMASMGLVPGVRKASW</sequence>
<reference key="1">
    <citation type="journal article" date="2008" name="Science">
        <title>Genome of an endosymbiont coupling N2 fixation to cellulolysis within RT protist cells in termite gut.</title>
        <authorList>
            <person name="Hongoh Y."/>
            <person name="Sharma V.K."/>
            <person name="Prakash T."/>
            <person name="Noda S."/>
            <person name="Toh H."/>
            <person name="Taylor T.D."/>
            <person name="Kudo T."/>
            <person name="Sakaki Y."/>
            <person name="Toyoda A."/>
            <person name="Hattori M."/>
            <person name="Ohkuma M."/>
        </authorList>
    </citation>
    <scope>NUCLEOTIDE SEQUENCE [LARGE SCALE GENOMIC DNA]</scope>
</reference>
<protein>
    <recommendedName>
        <fullName evidence="1">Small ribosomal subunit protein uS14</fullName>
    </recommendedName>
    <alternativeName>
        <fullName evidence="2">30S ribosomal protein S14</fullName>
    </alternativeName>
</protein>
<keyword id="KW-1185">Reference proteome</keyword>
<keyword id="KW-0687">Ribonucleoprotein</keyword>
<keyword id="KW-0689">Ribosomal protein</keyword>
<keyword id="KW-0694">RNA-binding</keyword>
<keyword id="KW-0699">rRNA-binding</keyword>
<evidence type="ECO:0000255" key="1">
    <source>
        <dbReference type="HAMAP-Rule" id="MF_00537"/>
    </source>
</evidence>
<evidence type="ECO:0000305" key="2"/>
<name>RS14_AZOPC</name>
<comment type="function">
    <text evidence="1">Binds 16S rRNA, required for the assembly of 30S particles and may also be responsible for determining the conformation of the 16S rRNA at the A site.</text>
</comment>
<comment type="subunit">
    <text evidence="1">Part of the 30S ribosomal subunit. Contacts proteins S3 and S10.</text>
</comment>
<comment type="similarity">
    <text evidence="1">Belongs to the universal ribosomal protein uS14 family.</text>
</comment>
<organism>
    <name type="scientific">Azobacteroides pseudotrichonymphae genomovar. CFP2</name>
    <dbReference type="NCBI Taxonomy" id="511995"/>
    <lineage>
        <taxon>Bacteria</taxon>
        <taxon>Pseudomonadati</taxon>
        <taxon>Bacteroidota</taxon>
        <taxon>Bacteroidia</taxon>
        <taxon>Bacteroidales</taxon>
        <taxon>Candidatus Azobacteroides</taxon>
    </lineage>
</organism>